<keyword id="KW-0031">Aminopeptidase</keyword>
<keyword id="KW-0963">Cytoplasm</keyword>
<keyword id="KW-0378">Hydrolase</keyword>
<keyword id="KW-0479">Metal-binding</keyword>
<keyword id="KW-0482">Metalloprotease</keyword>
<keyword id="KW-0645">Protease</keyword>
<keyword id="KW-0862">Zinc</keyword>
<gene>
    <name evidence="1" type="primary">mtfA</name>
    <name type="ordered locus">ECED1_2242</name>
</gene>
<sequence>MIKWPWKVQESAHQTALPWQEALSIPLLTCLTEQEQSKLVTLAERFLQQKRLVPLQGFELDSLRSCRIALLFCLPVLELGLEWLDGFHEVLIYPAPFVVDDEWEDDIGLVHNQRIVQSGQSWQQGPIVLNWLDIQDSFDASGFNLIIHEVAHKLDTRNGDRASGVPFIPLREVAGWEHDLHAAMNNIQEEIELVGENAASIDAYAASDPAECFAVLSEYFFSAPELFAPRFPSLWQRFCQFYQQDPLQRLHHANDTDSFSATNVH</sequence>
<name>MTFA_ECO81</name>
<dbReference type="EC" id="3.4.11.-" evidence="1"/>
<dbReference type="EMBL" id="CU928162">
    <property type="protein sequence ID" value="CAR08429.2"/>
    <property type="molecule type" value="Genomic_DNA"/>
</dbReference>
<dbReference type="RefSeq" id="WP_001302302.1">
    <property type="nucleotide sequence ID" value="NC_011745.1"/>
</dbReference>
<dbReference type="SMR" id="B7MWG3"/>
<dbReference type="MEROPS" id="M90.001"/>
<dbReference type="GeneID" id="75205786"/>
<dbReference type="KEGG" id="ecq:ECED1_2242"/>
<dbReference type="HOGENOM" id="CLU_063037_2_0_6"/>
<dbReference type="Proteomes" id="UP000000748">
    <property type="component" value="Chromosome"/>
</dbReference>
<dbReference type="GO" id="GO:0005829">
    <property type="term" value="C:cytosol"/>
    <property type="evidence" value="ECO:0007669"/>
    <property type="project" value="TreeGrafter"/>
</dbReference>
<dbReference type="GO" id="GO:0004177">
    <property type="term" value="F:aminopeptidase activity"/>
    <property type="evidence" value="ECO:0007669"/>
    <property type="project" value="UniProtKB-UniRule"/>
</dbReference>
<dbReference type="GO" id="GO:0008237">
    <property type="term" value="F:metallopeptidase activity"/>
    <property type="evidence" value="ECO:0007669"/>
    <property type="project" value="UniProtKB-UniRule"/>
</dbReference>
<dbReference type="GO" id="GO:0008270">
    <property type="term" value="F:zinc ion binding"/>
    <property type="evidence" value="ECO:0007669"/>
    <property type="project" value="UniProtKB-UniRule"/>
</dbReference>
<dbReference type="GO" id="GO:0006508">
    <property type="term" value="P:proteolysis"/>
    <property type="evidence" value="ECO:0007669"/>
    <property type="project" value="UniProtKB-KW"/>
</dbReference>
<dbReference type="CDD" id="cd20169">
    <property type="entry name" value="Peptidase_M90_mtfA"/>
    <property type="match status" value="1"/>
</dbReference>
<dbReference type="FunFam" id="1.10.472.150:FF:000001">
    <property type="entry name" value="Protein MtfA"/>
    <property type="match status" value="1"/>
</dbReference>
<dbReference type="FunFam" id="3.40.390.10:FF:000012">
    <property type="entry name" value="Protein MtfA"/>
    <property type="match status" value="1"/>
</dbReference>
<dbReference type="Gene3D" id="3.40.390.10">
    <property type="entry name" value="Collagenase (Catalytic Domain)"/>
    <property type="match status" value="1"/>
</dbReference>
<dbReference type="Gene3D" id="1.10.472.150">
    <property type="entry name" value="Glucose-regulated metallo-peptidase M90, N-terminal domain"/>
    <property type="match status" value="1"/>
</dbReference>
<dbReference type="HAMAP" id="MF_01593">
    <property type="entry name" value="MtfA"/>
    <property type="match status" value="1"/>
</dbReference>
<dbReference type="InterPro" id="IPR024079">
    <property type="entry name" value="MetalloPept_cat_dom_sf"/>
</dbReference>
<dbReference type="InterPro" id="IPR057256">
    <property type="entry name" value="MtfA_enterob"/>
</dbReference>
<dbReference type="InterPro" id="IPR010384">
    <property type="entry name" value="MtfA_fam"/>
</dbReference>
<dbReference type="InterPro" id="IPR042252">
    <property type="entry name" value="MtfA_N"/>
</dbReference>
<dbReference type="NCBIfam" id="NF011939">
    <property type="entry name" value="PRK15410.1"/>
    <property type="match status" value="1"/>
</dbReference>
<dbReference type="PANTHER" id="PTHR30164">
    <property type="entry name" value="MTFA PEPTIDASE"/>
    <property type="match status" value="1"/>
</dbReference>
<dbReference type="PANTHER" id="PTHR30164:SF2">
    <property type="entry name" value="PROTEIN MTFA"/>
    <property type="match status" value="1"/>
</dbReference>
<dbReference type="Pfam" id="PF06167">
    <property type="entry name" value="Peptidase_M90"/>
    <property type="match status" value="1"/>
</dbReference>
<dbReference type="SUPFAM" id="SSF55486">
    <property type="entry name" value="Metalloproteases ('zincins'), catalytic domain"/>
    <property type="match status" value="1"/>
</dbReference>
<feature type="chain" id="PRO_1000185708" description="Mlc titration factor A">
    <location>
        <begin position="1"/>
        <end position="265"/>
    </location>
</feature>
<feature type="binding site" evidence="1">
    <location>
        <position position="111"/>
    </location>
    <ligand>
        <name>Zn(2+)</name>
        <dbReference type="ChEBI" id="CHEBI:29105"/>
    </ligand>
</feature>
<feature type="binding site" evidence="1">
    <location>
        <position position="148"/>
    </location>
    <ligand>
        <name>Zn(2+)</name>
        <dbReference type="ChEBI" id="CHEBI:29105"/>
    </ligand>
</feature>
<feature type="binding site" evidence="1">
    <location>
        <position position="152"/>
    </location>
    <ligand>
        <name>Zn(2+)</name>
        <dbReference type="ChEBI" id="CHEBI:29105"/>
    </ligand>
</feature>
<feature type="binding site" evidence="1">
    <location>
        <position position="211"/>
    </location>
    <ligand>
        <name>Zn(2+)</name>
        <dbReference type="ChEBI" id="CHEBI:29105"/>
    </ligand>
</feature>
<protein>
    <recommendedName>
        <fullName evidence="1">Mlc titration factor A</fullName>
    </recommendedName>
    <alternativeName>
        <fullName evidence="1">Probable zinc metallopeptidase MtfA</fullName>
        <ecNumber evidence="1">3.4.11.-</ecNumber>
    </alternativeName>
</protein>
<reference key="1">
    <citation type="journal article" date="2009" name="PLoS Genet.">
        <title>Organised genome dynamics in the Escherichia coli species results in highly diverse adaptive paths.</title>
        <authorList>
            <person name="Touchon M."/>
            <person name="Hoede C."/>
            <person name="Tenaillon O."/>
            <person name="Barbe V."/>
            <person name="Baeriswyl S."/>
            <person name="Bidet P."/>
            <person name="Bingen E."/>
            <person name="Bonacorsi S."/>
            <person name="Bouchier C."/>
            <person name="Bouvet O."/>
            <person name="Calteau A."/>
            <person name="Chiapello H."/>
            <person name="Clermont O."/>
            <person name="Cruveiller S."/>
            <person name="Danchin A."/>
            <person name="Diard M."/>
            <person name="Dossat C."/>
            <person name="Karoui M.E."/>
            <person name="Frapy E."/>
            <person name="Garry L."/>
            <person name="Ghigo J.M."/>
            <person name="Gilles A.M."/>
            <person name="Johnson J."/>
            <person name="Le Bouguenec C."/>
            <person name="Lescat M."/>
            <person name="Mangenot S."/>
            <person name="Martinez-Jehanne V."/>
            <person name="Matic I."/>
            <person name="Nassif X."/>
            <person name="Oztas S."/>
            <person name="Petit M.A."/>
            <person name="Pichon C."/>
            <person name="Rouy Z."/>
            <person name="Ruf C.S."/>
            <person name="Schneider D."/>
            <person name="Tourret J."/>
            <person name="Vacherie B."/>
            <person name="Vallenet D."/>
            <person name="Medigue C."/>
            <person name="Rocha E.P.C."/>
            <person name="Denamur E."/>
        </authorList>
    </citation>
    <scope>NUCLEOTIDE SEQUENCE [LARGE SCALE GENOMIC DNA]</scope>
    <source>
        <strain>ED1a</strain>
    </source>
</reference>
<evidence type="ECO:0000255" key="1">
    <source>
        <dbReference type="HAMAP-Rule" id="MF_01593"/>
    </source>
</evidence>
<accession>B7MWG3</accession>
<proteinExistence type="inferred from homology"/>
<comment type="function">
    <text evidence="1">Involved in the modulation of the activity of the glucose-phosphotransferase system (glucose-PTS). Interacts with the transcriptional repressor Mlc, preventing its interaction with DNA and leading to the modulation of expression of genes regulated by Mlc, including ptsG, which encodes the PTS system glucose-specific EIICB component.</text>
</comment>
<comment type="function">
    <text evidence="1">Shows zinc-dependent metallopeptidase activity.</text>
</comment>
<comment type="cofactor">
    <cofactor evidence="1">
        <name>Zn(2+)</name>
        <dbReference type="ChEBI" id="CHEBI:29105"/>
    </cofactor>
    <text evidence="1">Binds 1 zinc ion per subunit.</text>
</comment>
<comment type="subunit">
    <text evidence="1">Interacts with Mlc.</text>
</comment>
<comment type="subcellular location">
    <subcellularLocation>
        <location evidence="1">Cytoplasm</location>
    </subcellularLocation>
</comment>
<comment type="similarity">
    <text evidence="1">Belongs to the MtfA family.</text>
</comment>
<organism>
    <name type="scientific">Escherichia coli O81 (strain ED1a)</name>
    <dbReference type="NCBI Taxonomy" id="585397"/>
    <lineage>
        <taxon>Bacteria</taxon>
        <taxon>Pseudomonadati</taxon>
        <taxon>Pseudomonadota</taxon>
        <taxon>Gammaproteobacteria</taxon>
        <taxon>Enterobacterales</taxon>
        <taxon>Enterobacteriaceae</taxon>
        <taxon>Escherichia</taxon>
    </lineage>
</organism>